<evidence type="ECO:0000255" key="1">
    <source>
        <dbReference type="HAMAP-Rule" id="MF_00274"/>
    </source>
</evidence>
<proteinExistence type="inferred from homology"/>
<gene>
    <name type="ordered locus">Bcer98_0019</name>
</gene>
<accession>A7GJT6</accession>
<feature type="chain" id="PRO_1000078746" description="Nucleoid-associated protein Bcer98_0019">
    <location>
        <begin position="1"/>
        <end position="109"/>
    </location>
</feature>
<protein>
    <recommendedName>
        <fullName evidence="1">Nucleoid-associated protein Bcer98_0019</fullName>
    </recommendedName>
</protein>
<keyword id="KW-0963">Cytoplasm</keyword>
<keyword id="KW-0238">DNA-binding</keyword>
<organism>
    <name type="scientific">Bacillus cytotoxicus (strain DSM 22905 / CIP 110041 / 391-98 / NVH 391-98)</name>
    <dbReference type="NCBI Taxonomy" id="315749"/>
    <lineage>
        <taxon>Bacteria</taxon>
        <taxon>Bacillati</taxon>
        <taxon>Bacillota</taxon>
        <taxon>Bacilli</taxon>
        <taxon>Bacillales</taxon>
        <taxon>Bacillaceae</taxon>
        <taxon>Bacillus</taxon>
        <taxon>Bacillus cereus group</taxon>
    </lineage>
</organism>
<dbReference type="EMBL" id="CP000764">
    <property type="protein sequence ID" value="ABS20394.1"/>
    <property type="molecule type" value="Genomic_DNA"/>
</dbReference>
<dbReference type="SMR" id="A7GJT6"/>
<dbReference type="STRING" id="315749.Bcer98_0019"/>
<dbReference type="KEGG" id="bcy:Bcer98_0019"/>
<dbReference type="eggNOG" id="COG0718">
    <property type="taxonomic scope" value="Bacteria"/>
</dbReference>
<dbReference type="HOGENOM" id="CLU_140930_1_0_9"/>
<dbReference type="OrthoDB" id="9795263at2"/>
<dbReference type="Proteomes" id="UP000002300">
    <property type="component" value="Chromosome"/>
</dbReference>
<dbReference type="GO" id="GO:0043590">
    <property type="term" value="C:bacterial nucleoid"/>
    <property type="evidence" value="ECO:0007669"/>
    <property type="project" value="UniProtKB-UniRule"/>
</dbReference>
<dbReference type="GO" id="GO:0005829">
    <property type="term" value="C:cytosol"/>
    <property type="evidence" value="ECO:0007669"/>
    <property type="project" value="TreeGrafter"/>
</dbReference>
<dbReference type="GO" id="GO:0003677">
    <property type="term" value="F:DNA binding"/>
    <property type="evidence" value="ECO:0007669"/>
    <property type="project" value="UniProtKB-UniRule"/>
</dbReference>
<dbReference type="FunFam" id="3.30.1310.10:FF:000002">
    <property type="entry name" value="Nucleoid-associated protein IKC_06587"/>
    <property type="match status" value="1"/>
</dbReference>
<dbReference type="Gene3D" id="3.30.1310.10">
    <property type="entry name" value="Nucleoid-associated protein YbaB-like domain"/>
    <property type="match status" value="1"/>
</dbReference>
<dbReference type="HAMAP" id="MF_00274">
    <property type="entry name" value="DNA_YbaB_EbfC"/>
    <property type="match status" value="1"/>
</dbReference>
<dbReference type="InterPro" id="IPR036894">
    <property type="entry name" value="YbaB-like_sf"/>
</dbReference>
<dbReference type="InterPro" id="IPR004401">
    <property type="entry name" value="YbaB/EbfC"/>
</dbReference>
<dbReference type="NCBIfam" id="TIGR00103">
    <property type="entry name" value="DNA_YbaB_EbfC"/>
    <property type="match status" value="1"/>
</dbReference>
<dbReference type="PANTHER" id="PTHR33449">
    <property type="entry name" value="NUCLEOID-ASSOCIATED PROTEIN YBAB"/>
    <property type="match status" value="1"/>
</dbReference>
<dbReference type="PANTHER" id="PTHR33449:SF1">
    <property type="entry name" value="NUCLEOID-ASSOCIATED PROTEIN YBAB"/>
    <property type="match status" value="1"/>
</dbReference>
<dbReference type="Pfam" id="PF02575">
    <property type="entry name" value="YbaB_DNA_bd"/>
    <property type="match status" value="1"/>
</dbReference>
<dbReference type="PIRSF" id="PIRSF004555">
    <property type="entry name" value="UCP004555"/>
    <property type="match status" value="1"/>
</dbReference>
<dbReference type="SUPFAM" id="SSF82607">
    <property type="entry name" value="YbaB-like"/>
    <property type="match status" value="1"/>
</dbReference>
<comment type="function">
    <text evidence="1">Binds to DNA and alters its conformation. May be involved in regulation of gene expression, nucleoid organization and DNA protection.</text>
</comment>
<comment type="subunit">
    <text evidence="1">Homodimer.</text>
</comment>
<comment type="subcellular location">
    <subcellularLocation>
        <location evidence="1">Cytoplasm</location>
        <location evidence="1">Nucleoid</location>
    </subcellularLocation>
</comment>
<comment type="similarity">
    <text evidence="1">Belongs to the YbaB/EbfC family.</text>
</comment>
<name>Y019_BACCN</name>
<reference key="1">
    <citation type="journal article" date="2008" name="Chem. Biol. Interact.">
        <title>Extending the Bacillus cereus group genomics to putative food-borne pathogens of different toxicity.</title>
        <authorList>
            <person name="Lapidus A."/>
            <person name="Goltsman E."/>
            <person name="Auger S."/>
            <person name="Galleron N."/>
            <person name="Segurens B."/>
            <person name="Dossat C."/>
            <person name="Land M.L."/>
            <person name="Broussolle V."/>
            <person name="Brillard J."/>
            <person name="Guinebretiere M.-H."/>
            <person name="Sanchis V."/>
            <person name="Nguen-the C."/>
            <person name="Lereclus D."/>
            <person name="Richardson P."/>
            <person name="Wincker P."/>
            <person name="Weissenbach J."/>
            <person name="Ehrlich S.D."/>
            <person name="Sorokin A."/>
        </authorList>
    </citation>
    <scope>NUCLEOTIDE SEQUENCE [LARGE SCALE GENOMIC DNA]</scope>
    <source>
        <strain>DSM 22905 / CIP 110041 / 391-98 / NVH 391-98</strain>
    </source>
</reference>
<sequence>MMRGGMGNMNNMMKQMQKMQKQMAKAQEELGEKQVEGTAGGGMVTVIANGHKQILDVKMKEEVVDPEDIEMLQDLVLAATNDALKKAEELSNATMGQFTKGLNLPGGLF</sequence>